<accession>Q6ENH4</accession>
<geneLocation type="chloroplast"/>
<dbReference type="EC" id="1.97.1.12" evidence="1"/>
<dbReference type="EMBL" id="AP006728">
    <property type="protein sequence ID" value="BAD26778.1"/>
    <property type="molecule type" value="Genomic_DNA"/>
</dbReference>
<dbReference type="RefSeq" id="YP_052749.1">
    <property type="nucleotide sequence ID" value="NC_005973.1"/>
</dbReference>
<dbReference type="SMR" id="Q6ENH4"/>
<dbReference type="STRING" id="4536.Q6ENH4"/>
<dbReference type="GeneID" id="2885889"/>
<dbReference type="Proteomes" id="UP000006591">
    <property type="component" value="Chloroplast"/>
</dbReference>
<dbReference type="GO" id="GO:0009535">
    <property type="term" value="C:chloroplast thylakoid membrane"/>
    <property type="evidence" value="ECO:0007669"/>
    <property type="project" value="UniProtKB-SubCell"/>
</dbReference>
<dbReference type="GO" id="GO:0009522">
    <property type="term" value="C:photosystem I"/>
    <property type="evidence" value="ECO:0007669"/>
    <property type="project" value="UniProtKB-KW"/>
</dbReference>
<dbReference type="GO" id="GO:0009536">
    <property type="term" value="C:plastid"/>
    <property type="evidence" value="ECO:0000305"/>
    <property type="project" value="Gramene"/>
</dbReference>
<dbReference type="GO" id="GO:0051539">
    <property type="term" value="F:4 iron, 4 sulfur cluster binding"/>
    <property type="evidence" value="ECO:0007669"/>
    <property type="project" value="UniProtKB-KW"/>
</dbReference>
<dbReference type="GO" id="GO:0016168">
    <property type="term" value="F:chlorophyll binding"/>
    <property type="evidence" value="ECO:0007669"/>
    <property type="project" value="UniProtKB-KW"/>
</dbReference>
<dbReference type="GO" id="GO:0009055">
    <property type="term" value="F:electron transfer activity"/>
    <property type="evidence" value="ECO:0007669"/>
    <property type="project" value="UniProtKB-UniRule"/>
</dbReference>
<dbReference type="GO" id="GO:0000287">
    <property type="term" value="F:magnesium ion binding"/>
    <property type="evidence" value="ECO:0007669"/>
    <property type="project" value="UniProtKB-UniRule"/>
</dbReference>
<dbReference type="GO" id="GO:0016491">
    <property type="term" value="F:oxidoreductase activity"/>
    <property type="evidence" value="ECO:0007669"/>
    <property type="project" value="UniProtKB-KW"/>
</dbReference>
<dbReference type="GO" id="GO:0015979">
    <property type="term" value="P:photosynthesis"/>
    <property type="evidence" value="ECO:0007669"/>
    <property type="project" value="UniProtKB-UniRule"/>
</dbReference>
<dbReference type="FunFam" id="1.20.1130.10:FF:000001">
    <property type="entry name" value="Photosystem I P700 chlorophyll a apoprotein A2"/>
    <property type="match status" value="1"/>
</dbReference>
<dbReference type="Gene3D" id="1.20.1130.10">
    <property type="entry name" value="Photosystem I PsaA/PsaB"/>
    <property type="match status" value="1"/>
</dbReference>
<dbReference type="HAMAP" id="MF_00458">
    <property type="entry name" value="PSI_PsaA"/>
    <property type="match status" value="1"/>
</dbReference>
<dbReference type="InterPro" id="IPR006243">
    <property type="entry name" value="PSI_PsaA"/>
</dbReference>
<dbReference type="InterPro" id="IPR001280">
    <property type="entry name" value="PSI_PsaA/B"/>
</dbReference>
<dbReference type="InterPro" id="IPR020586">
    <property type="entry name" value="PSI_PsaA/B_CS"/>
</dbReference>
<dbReference type="InterPro" id="IPR036408">
    <property type="entry name" value="PSI_PsaA/B_sf"/>
</dbReference>
<dbReference type="NCBIfam" id="TIGR01335">
    <property type="entry name" value="psaA"/>
    <property type="match status" value="1"/>
</dbReference>
<dbReference type="PANTHER" id="PTHR30128">
    <property type="entry name" value="OUTER MEMBRANE PROTEIN, OMPA-RELATED"/>
    <property type="match status" value="1"/>
</dbReference>
<dbReference type="PANTHER" id="PTHR30128:SF19">
    <property type="entry name" value="PHOTOSYSTEM I P700 CHLOROPHYLL A APOPROTEIN A1-RELATED"/>
    <property type="match status" value="1"/>
</dbReference>
<dbReference type="Pfam" id="PF00223">
    <property type="entry name" value="PsaA_PsaB"/>
    <property type="match status" value="1"/>
</dbReference>
<dbReference type="PIRSF" id="PIRSF002905">
    <property type="entry name" value="PSI_A"/>
    <property type="match status" value="1"/>
</dbReference>
<dbReference type="PRINTS" id="PR00257">
    <property type="entry name" value="PHOTSYSPSAAB"/>
</dbReference>
<dbReference type="SUPFAM" id="SSF81558">
    <property type="entry name" value="Photosystem I subunits PsaA/PsaB"/>
    <property type="match status" value="1"/>
</dbReference>
<dbReference type="PROSITE" id="PS00419">
    <property type="entry name" value="PHOTOSYSTEM_I_PSAAB"/>
    <property type="match status" value="1"/>
</dbReference>
<comment type="function">
    <text>PsaA and PsaB bind P700, the primary electron donor of photosystem I (PSI), as well as the electron acceptors A0, A1 and FX. PSI is a plastocyanin-ferredoxin oxidoreductase, converting photonic excitation into a charge separation, which transfers an electron from the donor P700 chlorophyll pair to the spectroscopically characterized acceptors A0, A1, FX, FA and FB in turn. Oxidized P700 is reduced on the lumenal side of the thylakoid membrane by plastocyanin.</text>
</comment>
<comment type="catalytic activity">
    <reaction evidence="1">
        <text>reduced [plastocyanin] + hnu + oxidized [2Fe-2S]-[ferredoxin] = oxidized [plastocyanin] + reduced [2Fe-2S]-[ferredoxin]</text>
        <dbReference type="Rhea" id="RHEA:30407"/>
        <dbReference type="Rhea" id="RHEA-COMP:10000"/>
        <dbReference type="Rhea" id="RHEA-COMP:10001"/>
        <dbReference type="Rhea" id="RHEA-COMP:10039"/>
        <dbReference type="Rhea" id="RHEA-COMP:10040"/>
        <dbReference type="ChEBI" id="CHEBI:29036"/>
        <dbReference type="ChEBI" id="CHEBI:30212"/>
        <dbReference type="ChEBI" id="CHEBI:33737"/>
        <dbReference type="ChEBI" id="CHEBI:33738"/>
        <dbReference type="ChEBI" id="CHEBI:49552"/>
        <dbReference type="EC" id="1.97.1.12"/>
    </reaction>
</comment>
<comment type="cofactor">
    <text evidence="1">P700 is a chlorophyll a/chlorophyll a' dimer, A0 is one or more chlorophyll a, A1 is one or both phylloquinones and FX is a shared 4Fe-4S iron-sulfur center.</text>
</comment>
<comment type="subunit">
    <text evidence="1">The PsaA/B heterodimer binds the P700 chlorophyll special pair and subsequent electron acceptors. PSI consists of a core antenna complex that captures photons, and an electron transfer chain that converts photonic excitation into a charge separation. The eukaryotic PSI reaction center is composed of at least 11 subunits.</text>
</comment>
<comment type="subcellular location">
    <subcellularLocation>
        <location evidence="1">Plastid</location>
        <location evidence="1">Chloroplast thylakoid membrane</location>
        <topology evidence="1">Multi-pass membrane protein</topology>
    </subcellularLocation>
</comment>
<comment type="similarity">
    <text evidence="1">Belongs to the PsaA/PsaB family.</text>
</comment>
<feature type="chain" id="PRO_0000088565" description="Photosystem I P700 chlorophyll a apoprotein A1">
    <location>
        <begin position="1"/>
        <end position="750"/>
    </location>
</feature>
<feature type="transmembrane region" description="Helical; Name=I" evidence="1">
    <location>
        <begin position="70"/>
        <end position="93"/>
    </location>
</feature>
<feature type="transmembrane region" description="Helical; Name=II" evidence="1">
    <location>
        <begin position="156"/>
        <end position="179"/>
    </location>
</feature>
<feature type="transmembrane region" description="Helical; Name=III" evidence="1">
    <location>
        <begin position="195"/>
        <end position="219"/>
    </location>
</feature>
<feature type="transmembrane region" description="Helical; Name=IV" evidence="1">
    <location>
        <begin position="291"/>
        <end position="309"/>
    </location>
</feature>
<feature type="transmembrane region" description="Helical; Name=V" evidence="1">
    <location>
        <begin position="346"/>
        <end position="369"/>
    </location>
</feature>
<feature type="transmembrane region" description="Helical; Name=VI" evidence="1">
    <location>
        <begin position="385"/>
        <end position="411"/>
    </location>
</feature>
<feature type="transmembrane region" description="Helical; Name=VII" evidence="1">
    <location>
        <begin position="433"/>
        <end position="455"/>
    </location>
</feature>
<feature type="transmembrane region" description="Helical; Name=VIII" evidence="1">
    <location>
        <begin position="531"/>
        <end position="549"/>
    </location>
</feature>
<feature type="transmembrane region" description="Helical; Name=IX" evidence="1">
    <location>
        <begin position="589"/>
        <end position="610"/>
    </location>
</feature>
<feature type="transmembrane region" description="Helical; Name=X" evidence="1">
    <location>
        <begin position="664"/>
        <end position="686"/>
    </location>
</feature>
<feature type="transmembrane region" description="Helical; Name=XI" evidence="1">
    <location>
        <begin position="724"/>
        <end position="744"/>
    </location>
</feature>
<feature type="binding site" evidence="1">
    <location>
        <position position="573"/>
    </location>
    <ligand>
        <name>[4Fe-4S] cluster</name>
        <dbReference type="ChEBI" id="CHEBI:49883"/>
        <note>ligand shared between dimeric partners</note>
    </ligand>
</feature>
<feature type="binding site" evidence="1">
    <location>
        <position position="582"/>
    </location>
    <ligand>
        <name>[4Fe-4S] cluster</name>
        <dbReference type="ChEBI" id="CHEBI:49883"/>
        <note>ligand shared between dimeric partners</note>
    </ligand>
</feature>
<feature type="binding site" description="axial binding residue" evidence="1">
    <location>
        <position position="675"/>
    </location>
    <ligand>
        <name>chlorophyll a'</name>
        <dbReference type="ChEBI" id="CHEBI:189419"/>
        <label>A1</label>
    </ligand>
    <ligandPart>
        <name>Mg</name>
        <dbReference type="ChEBI" id="CHEBI:25107"/>
    </ligandPart>
</feature>
<feature type="binding site" description="axial binding residue" evidence="1">
    <location>
        <position position="683"/>
    </location>
    <ligand>
        <name>chlorophyll a</name>
        <dbReference type="ChEBI" id="CHEBI:58416"/>
        <label>A3</label>
    </ligand>
    <ligandPart>
        <name>Mg</name>
        <dbReference type="ChEBI" id="CHEBI:25107"/>
    </ligandPart>
</feature>
<feature type="binding site" evidence="1">
    <location>
        <position position="691"/>
    </location>
    <ligand>
        <name>chlorophyll a</name>
        <dbReference type="ChEBI" id="CHEBI:58416"/>
        <label>A3</label>
    </ligand>
</feature>
<feature type="binding site" evidence="1">
    <location>
        <position position="692"/>
    </location>
    <ligand>
        <name>phylloquinone</name>
        <dbReference type="ChEBI" id="CHEBI:18067"/>
        <label>A</label>
    </ligand>
</feature>
<protein>
    <recommendedName>
        <fullName evidence="1">Photosystem I P700 chlorophyll a apoprotein A1</fullName>
        <ecNumber evidence="1">1.97.1.12</ecNumber>
    </recommendedName>
    <alternativeName>
        <fullName evidence="1">PSI-A</fullName>
    </alternativeName>
    <alternativeName>
        <fullName evidence="1">PsaA</fullName>
    </alternativeName>
</protein>
<sequence length="750" mass="83169">MMIRSPEPEVKIVVDRDPVKTSFEEWARPGHFSRTIAKGPDTTTWIWNLHADAHDFDSHTGDLEEISRKVFSAHFGQLSIIFLWLSGMYFHGARFSNYEAWLSDPTHIGPSAQVVWPIVGQEILNGDVGGGFRGIQITSGFFQIWRASGITSELQLYCTAIGALIFASLMLFAGWFHYHKAAPKLAWFQDVESMLNHHLAGLLGLGSLSWAGHQIHVSLPINQFLDAGVDPKEIPLPHEFILNRDLLAQLYPSFAEGATPFFTLNWSKYAEFLSFRGGLDPITGGLWLSDIAHHHLAIAILFLIAGHMYRTNWGIGHGLKDILEAHKGPFTGQGHKGLYEILTTSWHAQLSLNLAMLGSTTIVVAHHMYSMPPYPYLATDYGTQLSLFTHHMWIGGFLIVGAAAHAAIFMVRDYDPTTRYNDLLDRVLRHRDAIISHLNWVCIFLGFHSFGLYIHNDTMSALGRPQDMFSDTAIQLQPIFAQWVQNLHAGAPSVTAPGATTSTSLTWGGGELVAVGGKVALLPIPLGTADFLVHHIHAFTIHVTVLILLKGVLFARSSRLIPDKANLGFRFPCDGPGRGGTCQVSAWDHVFLGLFWMYNSISVVIFHFSWKMQSDVWGTISDQGVVTHITGGNFAQSSITINGWLRDFLWAQASQVIQSYGSSLSAYGLFFLGAHFVWAFSLMFLFSGRGYWQELIESIVWAHNKLKVAPATQPRALSIIQGRAVGVTHYLLGGIATTWAFFLARIIAVG</sequence>
<evidence type="ECO:0000255" key="1">
    <source>
        <dbReference type="HAMAP-Rule" id="MF_00458"/>
    </source>
</evidence>
<evidence type="ECO:0000312" key="2">
    <source>
        <dbReference type="Proteomes" id="UP000006591"/>
    </source>
</evidence>
<reference key="1">
    <citation type="journal article" date="2004" name="Gene">
        <title>The complete nucleotide sequence of wild rice (Oryza nivara) chloroplast genome: first genome wide comparative sequence analysis of wild and cultivated rice.</title>
        <authorList>
            <person name="Masood M.S."/>
            <person name="Nishikawa T."/>
            <person name="Fukuoka S."/>
            <person name="Njenga P.K."/>
            <person name="Tsudzuki T."/>
            <person name="Kadowaki K."/>
        </authorList>
    </citation>
    <scope>NUCLEOTIDE SEQUENCE [LARGE SCALE GENOMIC DNA]</scope>
    <source>
        <strain evidence="2">cv. SL10</strain>
    </source>
</reference>
<keyword id="KW-0004">4Fe-4S</keyword>
<keyword id="KW-0148">Chlorophyll</keyword>
<keyword id="KW-0150">Chloroplast</keyword>
<keyword id="KW-0157">Chromophore</keyword>
<keyword id="KW-0249">Electron transport</keyword>
<keyword id="KW-0408">Iron</keyword>
<keyword id="KW-0411">Iron-sulfur</keyword>
<keyword id="KW-0460">Magnesium</keyword>
<keyword id="KW-0472">Membrane</keyword>
<keyword id="KW-0479">Metal-binding</keyword>
<keyword id="KW-0560">Oxidoreductase</keyword>
<keyword id="KW-0602">Photosynthesis</keyword>
<keyword id="KW-0603">Photosystem I</keyword>
<keyword id="KW-0934">Plastid</keyword>
<keyword id="KW-1185">Reference proteome</keyword>
<keyword id="KW-0793">Thylakoid</keyword>
<keyword id="KW-0812">Transmembrane</keyword>
<keyword id="KW-1133">Transmembrane helix</keyword>
<keyword id="KW-0813">Transport</keyword>
<organism>
    <name type="scientific">Oryza nivara</name>
    <name type="common">Indian wild rice</name>
    <name type="synonym">Oryza sativa f. spontanea</name>
    <dbReference type="NCBI Taxonomy" id="4536"/>
    <lineage>
        <taxon>Eukaryota</taxon>
        <taxon>Viridiplantae</taxon>
        <taxon>Streptophyta</taxon>
        <taxon>Embryophyta</taxon>
        <taxon>Tracheophyta</taxon>
        <taxon>Spermatophyta</taxon>
        <taxon>Magnoliopsida</taxon>
        <taxon>Liliopsida</taxon>
        <taxon>Poales</taxon>
        <taxon>Poaceae</taxon>
        <taxon>BOP clade</taxon>
        <taxon>Oryzoideae</taxon>
        <taxon>Oryzeae</taxon>
        <taxon>Oryzinae</taxon>
        <taxon>Oryza</taxon>
    </lineage>
</organism>
<name>PSAA_ORYNI</name>
<proteinExistence type="inferred from homology"/>
<gene>
    <name evidence="1" type="primary">psaA</name>
</gene>